<comment type="function">
    <text evidence="1">Probably a major component of the bacterial microcompartment (BMC) shell dedicated to ethanolamine degradation. Each homohexamer has a central pore with an opening of up to 8.6 Angstroms. A positively-charged funnel leads to the pore from each side of the hexamer. The pore probably allows metabolite passage into and out of the BMC.</text>
</comment>
<comment type="pathway">
    <text>Amine and polyamine degradation; ethanolamine degradation.</text>
</comment>
<comment type="subunit">
    <text evidence="1 2">Homohexamer with a central pore of up to 8.6 Angstroms diameter. The hexamers pack into a two-dimensional array (By similarity). Interacts with EutQ (By similarity).</text>
</comment>
<comment type="subcellular location">
    <subcellularLocation>
        <location evidence="2">Bacterial microcompartment</location>
    </subcellularLocation>
</comment>
<comment type="similarity">
    <text evidence="3">Belongs to the bacterial microcompartments protein family.</text>
</comment>
<comment type="sequence caution" evidence="4">
    <conflict type="erroneous initiation">
        <sequence resource="EMBL-CDS" id="AAN81432"/>
    </conflict>
    <text>Extended N-terminus.</text>
</comment>
<keyword id="KW-1283">Bacterial microcompartment</keyword>
<keyword id="KW-1185">Reference proteome</keyword>
<sequence length="97" mass="9866">MEALGMIETRGLVALIEASDAMVKAARVKLVGVKQIGGGLCTAMVRGDVAACKAATDAGAAAAQRIGELVSVHVIPRPHGDLEEVFPIGLKGDSSNL</sequence>
<accession>P0ABF5</accession>
<accession>P77606</accession>
<proteinExistence type="inferred from homology"/>
<organism>
    <name type="scientific">Escherichia coli O6:H1 (strain CFT073 / ATCC 700928 / UPEC)</name>
    <dbReference type="NCBI Taxonomy" id="199310"/>
    <lineage>
        <taxon>Bacteria</taxon>
        <taxon>Pseudomonadati</taxon>
        <taxon>Pseudomonadota</taxon>
        <taxon>Gammaproteobacteria</taxon>
        <taxon>Enterobacterales</taxon>
        <taxon>Enterobacteriaceae</taxon>
        <taxon>Escherichia</taxon>
    </lineage>
</organism>
<protein>
    <recommendedName>
        <fullName>Bacterial microcompartment shell protein EutM</fullName>
    </recommendedName>
    <alternativeName>
        <fullName evidence="4">Bacterial microcompartment protein homohexamer</fullName>
        <shortName evidence="4">BMC-H</shortName>
    </alternativeName>
    <alternativeName>
        <fullName>Ethanolamine utilization protein EutM</fullName>
    </alternativeName>
</protein>
<gene>
    <name type="primary">eutM</name>
    <name type="synonym">cchA</name>
    <name type="ordered locus">c2982</name>
</gene>
<feature type="chain" id="PRO_0000042667" description="Bacterial microcompartment shell protein EutM">
    <location>
        <begin position="1"/>
        <end position="97"/>
    </location>
</feature>
<feature type="domain" description="BMC" evidence="3">
    <location>
        <begin position="3"/>
        <end position="87"/>
    </location>
</feature>
<reference key="1">
    <citation type="journal article" date="2002" name="Proc. Natl. Acad. Sci. U.S.A.">
        <title>Extensive mosaic structure revealed by the complete genome sequence of uropathogenic Escherichia coli.</title>
        <authorList>
            <person name="Welch R.A."/>
            <person name="Burland V."/>
            <person name="Plunkett G. III"/>
            <person name="Redford P."/>
            <person name="Roesch P."/>
            <person name="Rasko D."/>
            <person name="Buckles E.L."/>
            <person name="Liou S.-R."/>
            <person name="Boutin A."/>
            <person name="Hackett J."/>
            <person name="Stroud D."/>
            <person name="Mayhew G.F."/>
            <person name="Rose D.J."/>
            <person name="Zhou S."/>
            <person name="Schwartz D.C."/>
            <person name="Perna N.T."/>
            <person name="Mobley H.L.T."/>
            <person name="Donnenberg M.S."/>
            <person name="Blattner F.R."/>
        </authorList>
    </citation>
    <scope>NUCLEOTIDE SEQUENCE [LARGE SCALE GENOMIC DNA]</scope>
    <source>
        <strain>CFT073 / ATCC 700928 / UPEC</strain>
    </source>
</reference>
<name>EUTM_ECOL6</name>
<evidence type="ECO:0000250" key="1">
    <source>
        <dbReference type="UniProtKB" id="P0ABF4"/>
    </source>
</evidence>
<evidence type="ECO:0000250" key="2">
    <source>
        <dbReference type="UniProtKB" id="P41791"/>
    </source>
</evidence>
<evidence type="ECO:0000255" key="3">
    <source>
        <dbReference type="PROSITE-ProRule" id="PRU01278"/>
    </source>
</evidence>
<evidence type="ECO:0000305" key="4"/>
<dbReference type="EMBL" id="AE014075">
    <property type="protein sequence ID" value="AAN81432.1"/>
    <property type="status" value="ALT_INIT"/>
    <property type="molecule type" value="Genomic_DNA"/>
</dbReference>
<dbReference type="RefSeq" id="WP_000387713.1">
    <property type="nucleotide sequence ID" value="NZ_CP051263.1"/>
</dbReference>
<dbReference type="SMR" id="P0ABF5"/>
<dbReference type="STRING" id="199310.c2982"/>
<dbReference type="GeneID" id="93774683"/>
<dbReference type="KEGG" id="ecc:c2982"/>
<dbReference type="eggNOG" id="COG4577">
    <property type="taxonomic scope" value="Bacteria"/>
</dbReference>
<dbReference type="HOGENOM" id="CLU_064903_5_0_6"/>
<dbReference type="UniPathway" id="UPA00560"/>
<dbReference type="Proteomes" id="UP000001410">
    <property type="component" value="Chromosome"/>
</dbReference>
<dbReference type="GO" id="GO:0031469">
    <property type="term" value="C:bacterial microcompartment"/>
    <property type="evidence" value="ECO:0007669"/>
    <property type="project" value="UniProtKB-SubCell"/>
</dbReference>
<dbReference type="GO" id="GO:0046336">
    <property type="term" value="P:ethanolamine catabolic process"/>
    <property type="evidence" value="ECO:0007669"/>
    <property type="project" value="UniProtKB-UniPathway"/>
</dbReference>
<dbReference type="CDD" id="cd07045">
    <property type="entry name" value="BMC_CcmK_like"/>
    <property type="match status" value="1"/>
</dbReference>
<dbReference type="FunFam" id="3.30.70.1710:FF:000001">
    <property type="entry name" value="Ethanolamine utilization protein EutM"/>
    <property type="match status" value="1"/>
</dbReference>
<dbReference type="Gene3D" id="3.30.70.1710">
    <property type="match status" value="1"/>
</dbReference>
<dbReference type="InterPro" id="IPR020808">
    <property type="entry name" value="Bact_microcomp_CS"/>
</dbReference>
<dbReference type="InterPro" id="IPR000249">
    <property type="entry name" value="BMC_dom"/>
</dbReference>
<dbReference type="InterPro" id="IPR050575">
    <property type="entry name" value="BMC_shell"/>
</dbReference>
<dbReference type="InterPro" id="IPR037233">
    <property type="entry name" value="CcmK-like_sf"/>
</dbReference>
<dbReference type="InterPro" id="IPR044872">
    <property type="entry name" value="CcmK/CsoS1_BMC"/>
</dbReference>
<dbReference type="NCBIfam" id="NF012018">
    <property type="entry name" value="PRK15474.1"/>
    <property type="match status" value="1"/>
</dbReference>
<dbReference type="PANTHER" id="PTHR33941:SF10">
    <property type="entry name" value="BACTERIAL MICROCOMPARTMENT SHELL PROTEIN EUTM"/>
    <property type="match status" value="1"/>
</dbReference>
<dbReference type="PANTHER" id="PTHR33941">
    <property type="entry name" value="PROPANEDIOL UTILIZATION PROTEIN PDUA"/>
    <property type="match status" value="1"/>
</dbReference>
<dbReference type="Pfam" id="PF00936">
    <property type="entry name" value="BMC"/>
    <property type="match status" value="1"/>
</dbReference>
<dbReference type="SMART" id="SM00877">
    <property type="entry name" value="BMC"/>
    <property type="match status" value="1"/>
</dbReference>
<dbReference type="SUPFAM" id="SSF143414">
    <property type="entry name" value="CcmK-like"/>
    <property type="match status" value="1"/>
</dbReference>
<dbReference type="PROSITE" id="PS01139">
    <property type="entry name" value="BMC_1"/>
    <property type="match status" value="1"/>
</dbReference>
<dbReference type="PROSITE" id="PS51930">
    <property type="entry name" value="BMC_2"/>
    <property type="match status" value="1"/>
</dbReference>